<proteinExistence type="inferred from homology"/>
<keyword id="KW-0963">Cytoplasm</keyword>
<keyword id="KW-0269">Exonuclease</keyword>
<keyword id="KW-0378">Hydrolase</keyword>
<keyword id="KW-0540">Nuclease</keyword>
<organism>
    <name type="scientific">Francisella tularensis subsp. tularensis (strain FSC 198)</name>
    <dbReference type="NCBI Taxonomy" id="393115"/>
    <lineage>
        <taxon>Bacteria</taxon>
        <taxon>Pseudomonadati</taxon>
        <taxon>Pseudomonadota</taxon>
        <taxon>Gammaproteobacteria</taxon>
        <taxon>Thiotrichales</taxon>
        <taxon>Francisellaceae</taxon>
        <taxon>Francisella</taxon>
    </lineage>
</organism>
<evidence type="ECO:0000255" key="1">
    <source>
        <dbReference type="HAMAP-Rule" id="MF_00045"/>
    </source>
</evidence>
<sequence length="178" mass="20670">MQSADNLIWIDLEMTGLDVDSCKITEIAAIITDKDLNIIAEAEPIAIYQPDEVLANMNEWCIKTHTETGLTQRVKDSKISTEAAEQQILEFIRKFVPYQSSPLCGNSIWQDRRFLAKYMPNIDEYCHYRMLDVTTLKLLNQYWGDGKSFEKKNTHKALDDIRESIAELKFYRQKLLSI</sequence>
<feature type="chain" id="PRO_1000004247" description="Oligoribonuclease">
    <location>
        <begin position="1"/>
        <end position="178"/>
    </location>
</feature>
<feature type="domain" description="Exonuclease" evidence="1">
    <location>
        <begin position="7"/>
        <end position="168"/>
    </location>
</feature>
<feature type="active site" evidence="1">
    <location>
        <position position="128"/>
    </location>
</feature>
<comment type="function">
    <text evidence="1">3'-to-5' exoribonuclease specific for small oligoribonucleotides.</text>
</comment>
<comment type="subcellular location">
    <subcellularLocation>
        <location evidence="1">Cytoplasm</location>
    </subcellularLocation>
</comment>
<comment type="similarity">
    <text evidence="1">Belongs to the oligoribonuclease family.</text>
</comment>
<dbReference type="EC" id="3.1.15.-" evidence="1"/>
<dbReference type="EMBL" id="AM286280">
    <property type="protein sequence ID" value="CAL08244.1"/>
    <property type="molecule type" value="Genomic_DNA"/>
</dbReference>
<dbReference type="RefSeq" id="WP_003021796.1">
    <property type="nucleotide sequence ID" value="NC_008245.1"/>
</dbReference>
<dbReference type="SMR" id="Q14JL3"/>
<dbReference type="KEGG" id="ftf:FTF0228c"/>
<dbReference type="HOGENOM" id="CLU_064761_2_0_6"/>
<dbReference type="GO" id="GO:0005737">
    <property type="term" value="C:cytoplasm"/>
    <property type="evidence" value="ECO:0007669"/>
    <property type="project" value="UniProtKB-SubCell"/>
</dbReference>
<dbReference type="GO" id="GO:0000175">
    <property type="term" value="F:3'-5'-RNA exonuclease activity"/>
    <property type="evidence" value="ECO:0007669"/>
    <property type="project" value="InterPro"/>
</dbReference>
<dbReference type="GO" id="GO:0003676">
    <property type="term" value="F:nucleic acid binding"/>
    <property type="evidence" value="ECO:0007669"/>
    <property type="project" value="InterPro"/>
</dbReference>
<dbReference type="GO" id="GO:0006259">
    <property type="term" value="P:DNA metabolic process"/>
    <property type="evidence" value="ECO:0007669"/>
    <property type="project" value="UniProtKB-ARBA"/>
</dbReference>
<dbReference type="CDD" id="cd06135">
    <property type="entry name" value="Orn"/>
    <property type="match status" value="1"/>
</dbReference>
<dbReference type="FunFam" id="3.30.420.10:FF:000003">
    <property type="entry name" value="Oligoribonuclease"/>
    <property type="match status" value="1"/>
</dbReference>
<dbReference type="Gene3D" id="3.30.420.10">
    <property type="entry name" value="Ribonuclease H-like superfamily/Ribonuclease H"/>
    <property type="match status" value="1"/>
</dbReference>
<dbReference type="HAMAP" id="MF_00045">
    <property type="entry name" value="Oligoribonuclease"/>
    <property type="match status" value="1"/>
</dbReference>
<dbReference type="InterPro" id="IPR013520">
    <property type="entry name" value="Exonuclease_RNaseT/DNA_pol3"/>
</dbReference>
<dbReference type="InterPro" id="IPR022894">
    <property type="entry name" value="Oligoribonuclease"/>
</dbReference>
<dbReference type="InterPro" id="IPR012337">
    <property type="entry name" value="RNaseH-like_sf"/>
</dbReference>
<dbReference type="InterPro" id="IPR036397">
    <property type="entry name" value="RNaseH_sf"/>
</dbReference>
<dbReference type="NCBIfam" id="NF003765">
    <property type="entry name" value="PRK05359.1"/>
    <property type="match status" value="1"/>
</dbReference>
<dbReference type="PANTHER" id="PTHR11046">
    <property type="entry name" value="OLIGORIBONUCLEASE, MITOCHONDRIAL"/>
    <property type="match status" value="1"/>
</dbReference>
<dbReference type="PANTHER" id="PTHR11046:SF0">
    <property type="entry name" value="OLIGORIBONUCLEASE, MITOCHONDRIAL"/>
    <property type="match status" value="1"/>
</dbReference>
<dbReference type="Pfam" id="PF00929">
    <property type="entry name" value="RNase_T"/>
    <property type="match status" value="1"/>
</dbReference>
<dbReference type="SMART" id="SM00479">
    <property type="entry name" value="EXOIII"/>
    <property type="match status" value="1"/>
</dbReference>
<dbReference type="SUPFAM" id="SSF53098">
    <property type="entry name" value="Ribonuclease H-like"/>
    <property type="match status" value="1"/>
</dbReference>
<accession>Q14JL3</accession>
<protein>
    <recommendedName>
        <fullName evidence="1">Oligoribonuclease</fullName>
        <ecNumber evidence="1">3.1.15.-</ecNumber>
    </recommendedName>
</protein>
<gene>
    <name evidence="1" type="primary">orn</name>
    <name type="ordered locus">FTF0228c</name>
</gene>
<name>ORN_FRAT1</name>
<reference key="1">
    <citation type="journal article" date="2007" name="PLoS ONE">
        <title>Genome sequencing shows that European isolates of Francisella tularensis subspecies tularensis are almost identical to US laboratory strain Schu S4.</title>
        <authorList>
            <person name="Chaudhuri R.R."/>
            <person name="Ren C.-P."/>
            <person name="Desmond L."/>
            <person name="Vincent G.A."/>
            <person name="Silman N.J."/>
            <person name="Brehm J.K."/>
            <person name="Elmore M.J."/>
            <person name="Hudson M.J."/>
            <person name="Forsman M."/>
            <person name="Isherwood K.E."/>
            <person name="Gurycova D."/>
            <person name="Minton N.P."/>
            <person name="Titball R.W."/>
            <person name="Pallen M.J."/>
            <person name="Vipond R."/>
        </authorList>
    </citation>
    <scope>NUCLEOTIDE SEQUENCE [LARGE SCALE GENOMIC DNA]</scope>
    <source>
        <strain>FSC 198</strain>
    </source>
</reference>